<sequence>MEEFQGYLEIDGYQQHDFLYPLIFREYIYALAHGLNRSILLDNVGYDNKSSLLIIKRLISRMYQQNHLIISANYYKQNKFFGYNKNLYSQIISEGFAVIVEIPFSLRSVSSLEATEKEIIKSYNLRSLHSLFPFLEDKFPHLNYVSDVLIPYPIHLEILVQTLRYWVKDSSSLHLLRLFLHEYYNWNSLITPNKFIFSKSNQRLFLLLYNSHVCEYESILLFLRNQSSHLPLTSYGIFFEKIHFYEKIKYPGDEVFSNDFMVSILWFFKDPFMHYVRYQGKSILASKDTPLMMNKWKYYLVNLWQCHYYVWSQPGRIYINQLSKHSLYFLGYFASMQPNLSVVRSQMLENSFIMDNAMKKLDTLVPIIPLIVSLAKVKFCNALGHPISKSTWTDSSDFDIIDRFVRICRNISHYYSGSSRKKSLYRIKYILRLSCVKTLARKHKSTVRTFLKRLGSKLLEEFFTEEELIRSLIFPRTSYSLKKFYRGRIWYFDIFCINDLVNHE</sequence>
<protein>
    <recommendedName>
        <fullName evidence="1">Maturase K</fullName>
    </recommendedName>
    <alternativeName>
        <fullName evidence="1">Intron maturase</fullName>
    </alternativeName>
</protein>
<dbReference type="EMBL" id="AF288094">
    <property type="protein sequence ID" value="AAL35988.1"/>
    <property type="molecule type" value="Genomic_DNA"/>
</dbReference>
<dbReference type="GO" id="GO:0009507">
    <property type="term" value="C:chloroplast"/>
    <property type="evidence" value="ECO:0007669"/>
    <property type="project" value="UniProtKB-SubCell"/>
</dbReference>
<dbReference type="GO" id="GO:0003723">
    <property type="term" value="F:RNA binding"/>
    <property type="evidence" value="ECO:0007669"/>
    <property type="project" value="UniProtKB-KW"/>
</dbReference>
<dbReference type="GO" id="GO:0006397">
    <property type="term" value="P:mRNA processing"/>
    <property type="evidence" value="ECO:0007669"/>
    <property type="project" value="UniProtKB-KW"/>
</dbReference>
<dbReference type="GO" id="GO:0008380">
    <property type="term" value="P:RNA splicing"/>
    <property type="evidence" value="ECO:0007669"/>
    <property type="project" value="UniProtKB-UniRule"/>
</dbReference>
<dbReference type="GO" id="GO:0008033">
    <property type="term" value="P:tRNA processing"/>
    <property type="evidence" value="ECO:0007669"/>
    <property type="project" value="UniProtKB-KW"/>
</dbReference>
<dbReference type="HAMAP" id="MF_01390">
    <property type="entry name" value="MatK"/>
    <property type="match status" value="1"/>
</dbReference>
<dbReference type="InterPro" id="IPR024937">
    <property type="entry name" value="Domain_X"/>
</dbReference>
<dbReference type="InterPro" id="IPR002866">
    <property type="entry name" value="Maturase_MatK"/>
</dbReference>
<dbReference type="InterPro" id="IPR024942">
    <property type="entry name" value="Maturase_MatK_N"/>
</dbReference>
<dbReference type="PANTHER" id="PTHR34811">
    <property type="entry name" value="MATURASE K"/>
    <property type="match status" value="1"/>
</dbReference>
<dbReference type="PANTHER" id="PTHR34811:SF1">
    <property type="entry name" value="MATURASE K"/>
    <property type="match status" value="1"/>
</dbReference>
<dbReference type="Pfam" id="PF01348">
    <property type="entry name" value="Intron_maturas2"/>
    <property type="match status" value="1"/>
</dbReference>
<dbReference type="Pfam" id="PF01824">
    <property type="entry name" value="MatK_N"/>
    <property type="match status" value="1"/>
</dbReference>
<proteinExistence type="inferred from homology"/>
<gene>
    <name evidence="1" type="primary">matK</name>
</gene>
<geneLocation type="chloroplast"/>
<comment type="function">
    <text evidence="1">Usually encoded in the trnK tRNA gene intron. Probably assists in splicing its own and other chloroplast group II introns.</text>
</comment>
<comment type="subcellular location">
    <subcellularLocation>
        <location>Plastid</location>
        <location>Chloroplast</location>
    </subcellularLocation>
</comment>
<comment type="similarity">
    <text evidence="1">Belongs to the intron maturase 2 family. MatK subfamily.</text>
</comment>
<reference key="1">
    <citation type="submission" date="2000-07" db="EMBL/GenBank/DDBJ databases">
        <title>Phylogenetic relationships among putative genes encoding polygalacturonase inhibitor proteins (PGIPs) in Rosaceae.</title>
        <authorList>
            <person name="Potter D."/>
            <person name="Gao F."/>
            <person name="Oh S.-H."/>
            <person name="Baggett S."/>
        </authorList>
    </citation>
    <scope>NUCLEOTIDE SEQUENCE [GENOMIC DNA]</scope>
</reference>
<evidence type="ECO:0000255" key="1">
    <source>
        <dbReference type="HAMAP-Rule" id="MF_01390"/>
    </source>
</evidence>
<organism>
    <name type="scientific">Aruncus dioicus</name>
    <name type="common">Goat's beard</name>
    <dbReference type="NCBI Taxonomy" id="32220"/>
    <lineage>
        <taxon>Eukaryota</taxon>
        <taxon>Viridiplantae</taxon>
        <taxon>Streptophyta</taxon>
        <taxon>Embryophyta</taxon>
        <taxon>Tracheophyta</taxon>
        <taxon>Spermatophyta</taxon>
        <taxon>Magnoliopsida</taxon>
        <taxon>eudicotyledons</taxon>
        <taxon>Gunneridae</taxon>
        <taxon>Pentapetalae</taxon>
        <taxon>rosids</taxon>
        <taxon>fabids</taxon>
        <taxon>Rosales</taxon>
        <taxon>Rosaceae</taxon>
        <taxon>Amygdaloideae</taxon>
        <taxon>Spiraeeae</taxon>
        <taxon>Aruncus</taxon>
    </lineage>
</organism>
<name>MATK_ARUDI</name>
<keyword id="KW-0150">Chloroplast</keyword>
<keyword id="KW-0507">mRNA processing</keyword>
<keyword id="KW-0934">Plastid</keyword>
<keyword id="KW-0694">RNA-binding</keyword>
<keyword id="KW-0819">tRNA processing</keyword>
<accession>Q8WJR4</accession>
<feature type="chain" id="PRO_0000143258" description="Maturase K">
    <location>
        <begin position="1"/>
        <end position="504"/>
    </location>
</feature>